<feature type="chain" id="PRO_1000164088" description="Redox-sensing transcriptional repressor Rex">
    <location>
        <begin position="1"/>
        <end position="219"/>
    </location>
</feature>
<feature type="DNA-binding region" description="H-T-H motif" evidence="1">
    <location>
        <begin position="17"/>
        <end position="56"/>
    </location>
</feature>
<feature type="binding site" evidence="1">
    <location>
        <begin position="91"/>
        <end position="96"/>
    </location>
    <ligand>
        <name>NAD(+)</name>
        <dbReference type="ChEBI" id="CHEBI:57540"/>
    </ligand>
</feature>
<dbReference type="EMBL" id="CP000419">
    <property type="protein sequence ID" value="ABJ66590.1"/>
    <property type="molecule type" value="Genomic_DNA"/>
</dbReference>
<dbReference type="RefSeq" id="WP_011681430.1">
    <property type="nucleotide sequence ID" value="NC_008532.1"/>
</dbReference>
<dbReference type="SMR" id="Q03JN2"/>
<dbReference type="KEGG" id="ste:STER_1428"/>
<dbReference type="HOGENOM" id="CLU_061534_1_1_9"/>
<dbReference type="GO" id="GO:0005737">
    <property type="term" value="C:cytoplasm"/>
    <property type="evidence" value="ECO:0007669"/>
    <property type="project" value="UniProtKB-SubCell"/>
</dbReference>
<dbReference type="GO" id="GO:0003677">
    <property type="term" value="F:DNA binding"/>
    <property type="evidence" value="ECO:0007669"/>
    <property type="project" value="UniProtKB-UniRule"/>
</dbReference>
<dbReference type="GO" id="GO:0003700">
    <property type="term" value="F:DNA-binding transcription factor activity"/>
    <property type="evidence" value="ECO:0007669"/>
    <property type="project" value="UniProtKB-UniRule"/>
</dbReference>
<dbReference type="GO" id="GO:0045892">
    <property type="term" value="P:negative regulation of DNA-templated transcription"/>
    <property type="evidence" value="ECO:0007669"/>
    <property type="project" value="InterPro"/>
</dbReference>
<dbReference type="GO" id="GO:0051775">
    <property type="term" value="P:response to redox state"/>
    <property type="evidence" value="ECO:0007669"/>
    <property type="project" value="InterPro"/>
</dbReference>
<dbReference type="Gene3D" id="3.40.50.720">
    <property type="entry name" value="NAD(P)-binding Rossmann-like Domain"/>
    <property type="match status" value="1"/>
</dbReference>
<dbReference type="Gene3D" id="1.10.10.10">
    <property type="entry name" value="Winged helix-like DNA-binding domain superfamily/Winged helix DNA-binding domain"/>
    <property type="match status" value="1"/>
</dbReference>
<dbReference type="HAMAP" id="MF_01131">
    <property type="entry name" value="Rex"/>
    <property type="match status" value="1"/>
</dbReference>
<dbReference type="InterPro" id="IPR003781">
    <property type="entry name" value="CoA-bd"/>
</dbReference>
<dbReference type="InterPro" id="IPR036291">
    <property type="entry name" value="NAD(P)-bd_dom_sf"/>
</dbReference>
<dbReference type="InterPro" id="IPR009718">
    <property type="entry name" value="Rex_DNA-bd_C_dom"/>
</dbReference>
<dbReference type="InterPro" id="IPR022876">
    <property type="entry name" value="Tscrpt_rep_Rex"/>
</dbReference>
<dbReference type="InterPro" id="IPR036388">
    <property type="entry name" value="WH-like_DNA-bd_sf"/>
</dbReference>
<dbReference type="InterPro" id="IPR036390">
    <property type="entry name" value="WH_DNA-bd_sf"/>
</dbReference>
<dbReference type="NCBIfam" id="NF003988">
    <property type="entry name" value="PRK05472.1-1"/>
    <property type="match status" value="1"/>
</dbReference>
<dbReference type="NCBIfam" id="NF003989">
    <property type="entry name" value="PRK05472.1-3"/>
    <property type="match status" value="1"/>
</dbReference>
<dbReference type="NCBIfam" id="NF003991">
    <property type="entry name" value="PRK05472.1-5"/>
    <property type="match status" value="1"/>
</dbReference>
<dbReference type="NCBIfam" id="NF003994">
    <property type="entry name" value="PRK05472.2-3"/>
    <property type="match status" value="1"/>
</dbReference>
<dbReference type="NCBIfam" id="NF003995">
    <property type="entry name" value="PRK05472.2-4"/>
    <property type="match status" value="1"/>
</dbReference>
<dbReference type="NCBIfam" id="NF003996">
    <property type="entry name" value="PRK05472.2-5"/>
    <property type="match status" value="1"/>
</dbReference>
<dbReference type="PANTHER" id="PTHR35786">
    <property type="entry name" value="REDOX-SENSING TRANSCRIPTIONAL REPRESSOR REX"/>
    <property type="match status" value="1"/>
</dbReference>
<dbReference type="PANTHER" id="PTHR35786:SF1">
    <property type="entry name" value="REDOX-SENSING TRANSCRIPTIONAL REPRESSOR REX 1"/>
    <property type="match status" value="1"/>
</dbReference>
<dbReference type="Pfam" id="PF02629">
    <property type="entry name" value="CoA_binding"/>
    <property type="match status" value="1"/>
</dbReference>
<dbReference type="Pfam" id="PF06971">
    <property type="entry name" value="Put_DNA-bind_N"/>
    <property type="match status" value="1"/>
</dbReference>
<dbReference type="SMART" id="SM00881">
    <property type="entry name" value="CoA_binding"/>
    <property type="match status" value="1"/>
</dbReference>
<dbReference type="SUPFAM" id="SSF51735">
    <property type="entry name" value="NAD(P)-binding Rossmann-fold domains"/>
    <property type="match status" value="1"/>
</dbReference>
<dbReference type="SUPFAM" id="SSF46785">
    <property type="entry name" value="Winged helix' DNA-binding domain"/>
    <property type="match status" value="1"/>
</dbReference>
<proteinExistence type="inferred from homology"/>
<protein>
    <recommendedName>
        <fullName evidence="1">Redox-sensing transcriptional repressor Rex</fullName>
    </recommendedName>
</protein>
<organism>
    <name type="scientific">Streptococcus thermophilus (strain ATCC BAA-491 / LMD-9)</name>
    <dbReference type="NCBI Taxonomy" id="322159"/>
    <lineage>
        <taxon>Bacteria</taxon>
        <taxon>Bacillati</taxon>
        <taxon>Bacillota</taxon>
        <taxon>Bacilli</taxon>
        <taxon>Lactobacillales</taxon>
        <taxon>Streptococcaceae</taxon>
        <taxon>Streptococcus</taxon>
    </lineage>
</organism>
<evidence type="ECO:0000255" key="1">
    <source>
        <dbReference type="HAMAP-Rule" id="MF_01131"/>
    </source>
</evidence>
<sequence length="219" mass="24960">MTYEKNIPNATAKRLSLYYRIFKRFHRENIVKTSSKQIAEAIGIDPATVRRDFSYFGELGRRGFGYDVSKLMTFFAELLNDNATTKVALVGVGNIGRALLHYRFQERNRMQLVMAFDTDDNELVGSQTEDNIPIYGISQIKDKIAQEDIKTAILTVPSVKAQEVAELLVDAGIEGILCFSPVNLNLPRHVVLQYVDLTSELQTLLYFMKEEEKARRNND</sequence>
<keyword id="KW-0963">Cytoplasm</keyword>
<keyword id="KW-0238">DNA-binding</keyword>
<keyword id="KW-0520">NAD</keyword>
<keyword id="KW-0678">Repressor</keyword>
<keyword id="KW-0804">Transcription</keyword>
<keyword id="KW-0805">Transcription regulation</keyword>
<reference key="1">
    <citation type="journal article" date="2006" name="Proc. Natl. Acad. Sci. U.S.A.">
        <title>Comparative genomics of the lactic acid bacteria.</title>
        <authorList>
            <person name="Makarova K.S."/>
            <person name="Slesarev A."/>
            <person name="Wolf Y.I."/>
            <person name="Sorokin A."/>
            <person name="Mirkin B."/>
            <person name="Koonin E.V."/>
            <person name="Pavlov A."/>
            <person name="Pavlova N."/>
            <person name="Karamychev V."/>
            <person name="Polouchine N."/>
            <person name="Shakhova V."/>
            <person name="Grigoriev I."/>
            <person name="Lou Y."/>
            <person name="Rohksar D."/>
            <person name="Lucas S."/>
            <person name="Huang K."/>
            <person name="Goodstein D.M."/>
            <person name="Hawkins T."/>
            <person name="Plengvidhya V."/>
            <person name="Welker D."/>
            <person name="Hughes J."/>
            <person name="Goh Y."/>
            <person name="Benson A."/>
            <person name="Baldwin K."/>
            <person name="Lee J.-H."/>
            <person name="Diaz-Muniz I."/>
            <person name="Dosti B."/>
            <person name="Smeianov V."/>
            <person name="Wechter W."/>
            <person name="Barabote R."/>
            <person name="Lorca G."/>
            <person name="Altermann E."/>
            <person name="Barrangou R."/>
            <person name="Ganesan B."/>
            <person name="Xie Y."/>
            <person name="Rawsthorne H."/>
            <person name="Tamir D."/>
            <person name="Parker C."/>
            <person name="Breidt F."/>
            <person name="Broadbent J.R."/>
            <person name="Hutkins R."/>
            <person name="O'Sullivan D."/>
            <person name="Steele J."/>
            <person name="Unlu G."/>
            <person name="Saier M.H. Jr."/>
            <person name="Klaenhammer T."/>
            <person name="Richardson P."/>
            <person name="Kozyavkin S."/>
            <person name="Weimer B.C."/>
            <person name="Mills D.A."/>
        </authorList>
    </citation>
    <scope>NUCLEOTIDE SEQUENCE [LARGE SCALE GENOMIC DNA]</scope>
    <source>
        <strain>ATCC BAA-491 / LMD-9</strain>
    </source>
</reference>
<gene>
    <name evidence="1" type="primary">rex</name>
    <name type="ordered locus">STER_1428</name>
</gene>
<name>REX_STRTD</name>
<comment type="function">
    <text evidence="1">Modulates transcription in response to changes in cellular NADH/NAD(+) redox state.</text>
</comment>
<comment type="subunit">
    <text evidence="1">Homodimer.</text>
</comment>
<comment type="subcellular location">
    <subcellularLocation>
        <location evidence="1">Cytoplasm</location>
    </subcellularLocation>
</comment>
<comment type="similarity">
    <text evidence="1">Belongs to the transcriptional regulatory Rex family.</text>
</comment>
<accession>Q03JN2</accession>